<comment type="function">
    <text evidence="1">Endonuclease that is involved in the suppression of homologous recombination and thus may have a key role in the control of bacterial genetic diversity.</text>
</comment>
<comment type="function">
    <text evidence="1">Acts as a ribosome collision sensor, splitting the ribosome into its 2 subunits. Detects stalled/collided 70S ribosomes which it binds and splits by an ATP-hydrolysis driven conformational change. Acts upstream of the ribosome quality control system (RQC), a ribosome-associated complex that mediates the extraction of incompletely synthesized nascent chains from stalled ribosomes and their subsequent degradation. Probably generates substrates for RQC.</text>
</comment>
<comment type="subunit">
    <text evidence="1">Homodimer. Binds to stalled ribosomes, contacting rRNA.</text>
</comment>
<comment type="similarity">
    <text evidence="1">Belongs to the DNA mismatch repair MutS family. MutS2 subfamily.</text>
</comment>
<accession>B8D298</accession>
<gene>
    <name evidence="1" type="primary">mutS2</name>
    <name evidence="1" type="synonym">rqcU</name>
    <name type="ordered locus">Hore_05680</name>
</gene>
<evidence type="ECO:0000255" key="1">
    <source>
        <dbReference type="HAMAP-Rule" id="MF_00092"/>
    </source>
</evidence>
<reference key="1">
    <citation type="journal article" date="2009" name="PLoS ONE">
        <title>Genome analysis of the anaerobic thermohalophilic bacterium Halothermothrix orenii.</title>
        <authorList>
            <person name="Mavromatis K."/>
            <person name="Ivanova N."/>
            <person name="Anderson I."/>
            <person name="Lykidis A."/>
            <person name="Hooper S.D."/>
            <person name="Sun H."/>
            <person name="Kunin V."/>
            <person name="Lapidus A."/>
            <person name="Hugenholtz P."/>
            <person name="Patel B."/>
            <person name="Kyrpides N.C."/>
        </authorList>
    </citation>
    <scope>NUCLEOTIDE SEQUENCE [LARGE SCALE GENOMIC DNA]</scope>
    <source>
        <strain>H 168 / OCM 544 / DSM 9562</strain>
    </source>
</reference>
<dbReference type="EC" id="3.1.-.-" evidence="1"/>
<dbReference type="EC" id="3.6.4.-" evidence="1"/>
<dbReference type="EMBL" id="CP001098">
    <property type="protein sequence ID" value="ACL69325.1"/>
    <property type="molecule type" value="Genomic_DNA"/>
</dbReference>
<dbReference type="RefSeq" id="WP_012635513.1">
    <property type="nucleotide sequence ID" value="NC_011899.1"/>
</dbReference>
<dbReference type="SMR" id="B8D298"/>
<dbReference type="STRING" id="373903.Hore_05680"/>
<dbReference type="KEGG" id="hor:Hore_05680"/>
<dbReference type="eggNOG" id="COG1193">
    <property type="taxonomic scope" value="Bacteria"/>
</dbReference>
<dbReference type="HOGENOM" id="CLU_011252_2_1_9"/>
<dbReference type="OrthoDB" id="9808166at2"/>
<dbReference type="Proteomes" id="UP000000719">
    <property type="component" value="Chromosome"/>
</dbReference>
<dbReference type="GO" id="GO:0005524">
    <property type="term" value="F:ATP binding"/>
    <property type="evidence" value="ECO:0007669"/>
    <property type="project" value="UniProtKB-UniRule"/>
</dbReference>
<dbReference type="GO" id="GO:0016887">
    <property type="term" value="F:ATP hydrolysis activity"/>
    <property type="evidence" value="ECO:0007669"/>
    <property type="project" value="InterPro"/>
</dbReference>
<dbReference type="GO" id="GO:0140664">
    <property type="term" value="F:ATP-dependent DNA damage sensor activity"/>
    <property type="evidence" value="ECO:0007669"/>
    <property type="project" value="InterPro"/>
</dbReference>
<dbReference type="GO" id="GO:0004519">
    <property type="term" value="F:endonuclease activity"/>
    <property type="evidence" value="ECO:0007669"/>
    <property type="project" value="UniProtKB-UniRule"/>
</dbReference>
<dbReference type="GO" id="GO:0030983">
    <property type="term" value="F:mismatched DNA binding"/>
    <property type="evidence" value="ECO:0007669"/>
    <property type="project" value="InterPro"/>
</dbReference>
<dbReference type="GO" id="GO:0043023">
    <property type="term" value="F:ribosomal large subunit binding"/>
    <property type="evidence" value="ECO:0007669"/>
    <property type="project" value="UniProtKB-UniRule"/>
</dbReference>
<dbReference type="GO" id="GO:0019843">
    <property type="term" value="F:rRNA binding"/>
    <property type="evidence" value="ECO:0007669"/>
    <property type="project" value="UniProtKB-UniRule"/>
</dbReference>
<dbReference type="GO" id="GO:0006298">
    <property type="term" value="P:mismatch repair"/>
    <property type="evidence" value="ECO:0007669"/>
    <property type="project" value="InterPro"/>
</dbReference>
<dbReference type="GO" id="GO:0045910">
    <property type="term" value="P:negative regulation of DNA recombination"/>
    <property type="evidence" value="ECO:0007669"/>
    <property type="project" value="InterPro"/>
</dbReference>
<dbReference type="GO" id="GO:0072344">
    <property type="term" value="P:rescue of stalled ribosome"/>
    <property type="evidence" value="ECO:0007669"/>
    <property type="project" value="UniProtKB-UniRule"/>
</dbReference>
<dbReference type="CDD" id="cd03280">
    <property type="entry name" value="ABC_MutS2"/>
    <property type="match status" value="1"/>
</dbReference>
<dbReference type="FunFam" id="3.40.50.300:FF:000830">
    <property type="entry name" value="Endonuclease MutS2"/>
    <property type="match status" value="1"/>
</dbReference>
<dbReference type="Gene3D" id="3.30.1370.110">
    <property type="match status" value="1"/>
</dbReference>
<dbReference type="Gene3D" id="3.40.50.300">
    <property type="entry name" value="P-loop containing nucleotide triphosphate hydrolases"/>
    <property type="match status" value="1"/>
</dbReference>
<dbReference type="HAMAP" id="MF_00092">
    <property type="entry name" value="MutS2"/>
    <property type="match status" value="1"/>
</dbReference>
<dbReference type="InterPro" id="IPR000432">
    <property type="entry name" value="DNA_mismatch_repair_MutS_C"/>
</dbReference>
<dbReference type="InterPro" id="IPR007696">
    <property type="entry name" value="DNA_mismatch_repair_MutS_core"/>
</dbReference>
<dbReference type="InterPro" id="IPR036187">
    <property type="entry name" value="DNA_mismatch_repair_MutS_sf"/>
</dbReference>
<dbReference type="InterPro" id="IPR046893">
    <property type="entry name" value="MSSS"/>
</dbReference>
<dbReference type="InterPro" id="IPR045076">
    <property type="entry name" value="MutS"/>
</dbReference>
<dbReference type="InterPro" id="IPR005747">
    <property type="entry name" value="MutS2"/>
</dbReference>
<dbReference type="InterPro" id="IPR027417">
    <property type="entry name" value="P-loop_NTPase"/>
</dbReference>
<dbReference type="InterPro" id="IPR002625">
    <property type="entry name" value="Smr_dom"/>
</dbReference>
<dbReference type="InterPro" id="IPR036063">
    <property type="entry name" value="Smr_dom_sf"/>
</dbReference>
<dbReference type="NCBIfam" id="TIGR01069">
    <property type="entry name" value="mutS2"/>
    <property type="match status" value="1"/>
</dbReference>
<dbReference type="PANTHER" id="PTHR48466:SF2">
    <property type="entry name" value="OS10G0509000 PROTEIN"/>
    <property type="match status" value="1"/>
</dbReference>
<dbReference type="PANTHER" id="PTHR48466">
    <property type="entry name" value="OS10G0509000 PROTEIN-RELATED"/>
    <property type="match status" value="1"/>
</dbReference>
<dbReference type="Pfam" id="PF20297">
    <property type="entry name" value="MSSS"/>
    <property type="match status" value="1"/>
</dbReference>
<dbReference type="Pfam" id="PF00488">
    <property type="entry name" value="MutS_V"/>
    <property type="match status" value="1"/>
</dbReference>
<dbReference type="Pfam" id="PF01713">
    <property type="entry name" value="Smr"/>
    <property type="match status" value="1"/>
</dbReference>
<dbReference type="PIRSF" id="PIRSF005814">
    <property type="entry name" value="MutS_YshD"/>
    <property type="match status" value="1"/>
</dbReference>
<dbReference type="SMART" id="SM00534">
    <property type="entry name" value="MUTSac"/>
    <property type="match status" value="1"/>
</dbReference>
<dbReference type="SMART" id="SM00533">
    <property type="entry name" value="MUTSd"/>
    <property type="match status" value="1"/>
</dbReference>
<dbReference type="SMART" id="SM00463">
    <property type="entry name" value="SMR"/>
    <property type="match status" value="1"/>
</dbReference>
<dbReference type="SUPFAM" id="SSF48334">
    <property type="entry name" value="DNA repair protein MutS, domain III"/>
    <property type="match status" value="1"/>
</dbReference>
<dbReference type="SUPFAM" id="SSF52540">
    <property type="entry name" value="P-loop containing nucleoside triphosphate hydrolases"/>
    <property type="match status" value="1"/>
</dbReference>
<dbReference type="SUPFAM" id="SSF160443">
    <property type="entry name" value="SMR domain-like"/>
    <property type="match status" value="1"/>
</dbReference>
<dbReference type="PROSITE" id="PS50828">
    <property type="entry name" value="SMR"/>
    <property type="match status" value="1"/>
</dbReference>
<name>MUTS2_HALOH</name>
<organism>
    <name type="scientific">Halothermothrix orenii (strain H 168 / OCM 544 / DSM 9562)</name>
    <dbReference type="NCBI Taxonomy" id="373903"/>
    <lineage>
        <taxon>Bacteria</taxon>
        <taxon>Bacillati</taxon>
        <taxon>Bacillota</taxon>
        <taxon>Clostridia</taxon>
        <taxon>Halanaerobiales</taxon>
        <taxon>Halothermotrichaceae</taxon>
        <taxon>Halothermothrix</taxon>
    </lineage>
</organism>
<keyword id="KW-0067">ATP-binding</keyword>
<keyword id="KW-0238">DNA-binding</keyword>
<keyword id="KW-0255">Endonuclease</keyword>
<keyword id="KW-0378">Hydrolase</keyword>
<keyword id="KW-0540">Nuclease</keyword>
<keyword id="KW-0547">Nucleotide-binding</keyword>
<keyword id="KW-1185">Reference proteome</keyword>
<keyword id="KW-0694">RNA-binding</keyword>
<keyword id="KW-0699">rRNA-binding</keyword>
<sequence length="791" mass="89692">MEESSLEILEFDKIIDRVQEFAATIIGKEIISRLQPVDNLNYVKNKLREVSSAREILEEYGRPPFGGIRDLREIIEKADKGIVLSVKEVMDVRSTLEGVRELKKYSREIGTGIDDELQDIYSIITEKFDRLTPLKQLENEINRCIDEHGEIKDSASRKLRSIRREMDRIEGKINDKLNSIINNTRYQEMLQDKLVTIRGNRYVVPVKSSYKNTFSGIVHDQSTSGLTYFMEPMAIVKLNNRLGELKRAEEQEIYRILKKLSENIKEHTRDLSDNLEMVSLLDVDFARARFSIEIEGIEPGINDKGFINIRGGRHPLLKVKPVPIDITVGNEFKTLVITGPNTGGKTVALKTVGLFVLMVQAGLHIPAEEETVISIFNGVYADIGDEQSIEQNLSTFSSHINRIKRFLGKADARSLVLLDEIGVGTDPREGAALGVAILEHLRERGVTTIATTHYSEIKSYAYSQDGVENASVEFDMETLQPTYRLLMGIPGGSNAFEIALKLGLPHDIIKDGKELMSGDDIKVENIISDLNEERKKYEQLKIEIEERLEAVKKKEQKYDSLLTDLEKRKKKLITEAREEALQIIKKTRKESKEILRRLKNKEFASRSDIDRVENEINLNLKETEKEISEKRQNKDGRTRVKEISCGDQVRLKKTGQKGEVISVDREKGEAVIQAGIMKVTTGLDEVAKIDIPDDTKDELFHSYQVKKKSRVSPTLDLRGERYETAQHKLDKYLDDVFLAGLKQVEIIHGKGTGALRKAVHTVLEKNPHITSYRLGRQEEGGSGVTIADLKS</sequence>
<protein>
    <recommendedName>
        <fullName evidence="1">Endonuclease MutS2</fullName>
        <ecNumber evidence="1">3.1.-.-</ecNumber>
    </recommendedName>
    <alternativeName>
        <fullName evidence="1">Ribosome-associated protein quality control-upstream factor</fullName>
        <shortName evidence="1">RQC-upstream factor</shortName>
        <shortName evidence="1">RqcU</shortName>
        <ecNumber evidence="1">3.6.4.-</ecNumber>
    </alternativeName>
</protein>
<feature type="chain" id="PRO_1000118563" description="Endonuclease MutS2">
    <location>
        <begin position="1"/>
        <end position="791"/>
    </location>
</feature>
<feature type="domain" description="Smr" evidence="1">
    <location>
        <begin position="715"/>
        <end position="790"/>
    </location>
</feature>
<feature type="binding site" evidence="1">
    <location>
        <begin position="339"/>
        <end position="346"/>
    </location>
    <ligand>
        <name>ATP</name>
        <dbReference type="ChEBI" id="CHEBI:30616"/>
    </ligand>
</feature>
<proteinExistence type="inferred from homology"/>